<accession>Q9PVF1</accession>
<comment type="function">
    <text evidence="4">Snake venom phospholipase A2 (PLA2) that inhibits ADP-induced platelet aggregation. PLA2 catalyzes the calcium-dependent hydrolysis of the 2-acyl groups in 3-sn-phosphoglycerides.</text>
</comment>
<comment type="catalytic activity">
    <reaction evidence="2 3">
        <text>a 1,2-diacyl-sn-glycero-3-phosphocholine + H2O = a 1-acyl-sn-glycero-3-phosphocholine + a fatty acid + H(+)</text>
        <dbReference type="Rhea" id="RHEA:15801"/>
        <dbReference type="ChEBI" id="CHEBI:15377"/>
        <dbReference type="ChEBI" id="CHEBI:15378"/>
        <dbReference type="ChEBI" id="CHEBI:28868"/>
        <dbReference type="ChEBI" id="CHEBI:57643"/>
        <dbReference type="ChEBI" id="CHEBI:58168"/>
        <dbReference type="EC" id="3.1.1.4"/>
    </reaction>
</comment>
<comment type="cofactor">
    <cofactor evidence="1">
        <name>Ca(2+)</name>
        <dbReference type="ChEBI" id="CHEBI:29108"/>
    </cofactor>
    <text evidence="1">Binds 1 Ca(2+) ion per subunit.</text>
</comment>
<comment type="subunit">
    <text evidence="4">Homodimer.</text>
</comment>
<comment type="subcellular location">
    <subcellularLocation>
        <location evidence="4">Secreted</location>
    </subcellularLocation>
</comment>
<comment type="tissue specificity">
    <text evidence="6">Expressed by the venom gland.</text>
</comment>
<comment type="mass spectrometry"/>
<comment type="similarity">
    <text evidence="5">Belongs to the phospholipase A2 family. Group II subfamily. D49 sub-subfamily.</text>
</comment>
<name>PA2AA_CALRH</name>
<organism>
    <name type="scientific">Calloselasma rhodostoma</name>
    <name type="common">Malayan pit viper</name>
    <name type="synonym">Agkistrodon rhodostoma</name>
    <dbReference type="NCBI Taxonomy" id="8717"/>
    <lineage>
        <taxon>Eukaryota</taxon>
        <taxon>Metazoa</taxon>
        <taxon>Chordata</taxon>
        <taxon>Craniata</taxon>
        <taxon>Vertebrata</taxon>
        <taxon>Euteleostomi</taxon>
        <taxon>Lepidosauria</taxon>
        <taxon>Squamata</taxon>
        <taxon>Bifurcata</taxon>
        <taxon>Unidentata</taxon>
        <taxon>Episquamata</taxon>
        <taxon>Toxicofera</taxon>
        <taxon>Serpentes</taxon>
        <taxon>Colubroidea</taxon>
        <taxon>Viperidae</taxon>
        <taxon>Crotalinae</taxon>
        <taxon>Calloselasma</taxon>
    </lineage>
</organism>
<proteinExistence type="evidence at protein level"/>
<sequence>VEGSLVQFETMIMKLAKRSGFFWYSFYGCYCGWGGHGLPQDPTDRCCFVHDCCYGKVTNCNPKTATYSYTEENDGIVCGGDDPCKKQVCECDRVAAMCFRDNKDTYDSDKYWKLPPQKCQEDPEPC</sequence>
<dbReference type="EC" id="3.1.1.4"/>
<dbReference type="EMBL" id="AF104068">
    <property type="protein sequence ID" value="AAF03252.1"/>
    <property type="molecule type" value="mRNA"/>
</dbReference>
<dbReference type="SMR" id="Q9PVF1"/>
<dbReference type="GO" id="GO:0005576">
    <property type="term" value="C:extracellular region"/>
    <property type="evidence" value="ECO:0007669"/>
    <property type="project" value="UniProtKB-SubCell"/>
</dbReference>
<dbReference type="GO" id="GO:0005509">
    <property type="term" value="F:calcium ion binding"/>
    <property type="evidence" value="ECO:0007669"/>
    <property type="project" value="InterPro"/>
</dbReference>
<dbReference type="GO" id="GO:0047498">
    <property type="term" value="F:calcium-dependent phospholipase A2 activity"/>
    <property type="evidence" value="ECO:0007669"/>
    <property type="project" value="TreeGrafter"/>
</dbReference>
<dbReference type="GO" id="GO:0005543">
    <property type="term" value="F:phospholipid binding"/>
    <property type="evidence" value="ECO:0007669"/>
    <property type="project" value="TreeGrafter"/>
</dbReference>
<dbReference type="GO" id="GO:0090729">
    <property type="term" value="F:toxin activity"/>
    <property type="evidence" value="ECO:0007669"/>
    <property type="project" value="UniProtKB-KW"/>
</dbReference>
<dbReference type="GO" id="GO:0050482">
    <property type="term" value="P:arachidonate secretion"/>
    <property type="evidence" value="ECO:0007669"/>
    <property type="project" value="InterPro"/>
</dbReference>
<dbReference type="GO" id="GO:0016042">
    <property type="term" value="P:lipid catabolic process"/>
    <property type="evidence" value="ECO:0007669"/>
    <property type="project" value="UniProtKB-KW"/>
</dbReference>
<dbReference type="GO" id="GO:0042130">
    <property type="term" value="P:negative regulation of T cell proliferation"/>
    <property type="evidence" value="ECO:0007669"/>
    <property type="project" value="TreeGrafter"/>
</dbReference>
<dbReference type="GO" id="GO:0006644">
    <property type="term" value="P:phospholipid metabolic process"/>
    <property type="evidence" value="ECO:0007669"/>
    <property type="project" value="InterPro"/>
</dbReference>
<dbReference type="CDD" id="cd00125">
    <property type="entry name" value="PLA2c"/>
    <property type="match status" value="1"/>
</dbReference>
<dbReference type="FunFam" id="1.20.90.10:FF:000001">
    <property type="entry name" value="Basic phospholipase A2 homolog"/>
    <property type="match status" value="1"/>
</dbReference>
<dbReference type="Gene3D" id="1.20.90.10">
    <property type="entry name" value="Phospholipase A2 domain"/>
    <property type="match status" value="1"/>
</dbReference>
<dbReference type="InterPro" id="IPR001211">
    <property type="entry name" value="PLipase_A2"/>
</dbReference>
<dbReference type="InterPro" id="IPR033112">
    <property type="entry name" value="PLipase_A2_Asp_AS"/>
</dbReference>
<dbReference type="InterPro" id="IPR016090">
    <property type="entry name" value="PLipase_A2_dom"/>
</dbReference>
<dbReference type="InterPro" id="IPR036444">
    <property type="entry name" value="PLipase_A2_dom_sf"/>
</dbReference>
<dbReference type="InterPro" id="IPR033113">
    <property type="entry name" value="PLipase_A2_His_AS"/>
</dbReference>
<dbReference type="PANTHER" id="PTHR11716">
    <property type="entry name" value="PHOSPHOLIPASE A2 FAMILY MEMBER"/>
    <property type="match status" value="1"/>
</dbReference>
<dbReference type="PANTHER" id="PTHR11716:SF9">
    <property type="entry name" value="PHOSPHOLIPASE A2, MEMBRANE ASSOCIATED"/>
    <property type="match status" value="1"/>
</dbReference>
<dbReference type="Pfam" id="PF00068">
    <property type="entry name" value="Phospholip_A2_1"/>
    <property type="match status" value="1"/>
</dbReference>
<dbReference type="PRINTS" id="PR00389">
    <property type="entry name" value="PHPHLIPASEA2"/>
</dbReference>
<dbReference type="SMART" id="SM00085">
    <property type="entry name" value="PA2c"/>
    <property type="match status" value="1"/>
</dbReference>
<dbReference type="SUPFAM" id="SSF48619">
    <property type="entry name" value="Phospholipase A2, PLA2"/>
    <property type="match status" value="1"/>
</dbReference>
<dbReference type="PROSITE" id="PS00119">
    <property type="entry name" value="PA2_ASP"/>
    <property type="match status" value="1"/>
</dbReference>
<dbReference type="PROSITE" id="PS00118">
    <property type="entry name" value="PA2_HIS"/>
    <property type="match status" value="1"/>
</dbReference>
<keyword id="KW-0106">Calcium</keyword>
<keyword id="KW-1015">Disulfide bond</keyword>
<keyword id="KW-1199">Hemostasis impairing toxin</keyword>
<keyword id="KW-0378">Hydrolase</keyword>
<keyword id="KW-0442">Lipid degradation</keyword>
<keyword id="KW-0443">Lipid metabolism</keyword>
<keyword id="KW-0479">Metal-binding</keyword>
<keyword id="KW-1201">Platelet aggregation inhibiting toxin</keyword>
<keyword id="KW-0964">Secreted</keyword>
<keyword id="KW-0732">Signal</keyword>
<keyword id="KW-0800">Toxin</keyword>
<reference key="1">
    <citation type="journal article" date="2000" name="Eur. J. Biochem.">
        <title>Phospholipases A2 from Callosellasma rhodostoma venom gland. Cloning and sequencing of 10 of the cDNAs, three-dimensional modelling and chemical modification of the major isozyme.</title>
        <authorList>
            <person name="Tsai I.-H."/>
            <person name="Wang Y.-M."/>
            <person name="Au L.-C."/>
            <person name="Ko T.-P."/>
            <person name="Chen Y.-H."/>
            <person name="Chu Y.-F."/>
        </authorList>
    </citation>
    <scope>NUCLEOTIDE SEQUENCE [MRNA]</scope>
    <scope>FUNCTION</scope>
    <scope>SUBUNIT</scope>
    <scope>MASS SPECTROMETRY</scope>
    <scope>SUBCELLULAR LOCATION</scope>
    <source>
        <tissue>Venom</tissue>
        <tissue>Venom gland</tissue>
    </source>
</reference>
<protein>
    <recommendedName>
        <fullName>Acidic phospholipase A2 S1E6-a</fullName>
        <shortName>svPLA2</shortName>
        <ecNumber>3.1.1.4</ecNumber>
    </recommendedName>
    <alternativeName>
        <fullName>Phosphatidylcholine 2-acylhydrolase</fullName>
    </alternativeName>
</protein>
<evidence type="ECO:0000250" key="1"/>
<evidence type="ECO:0000255" key="2">
    <source>
        <dbReference type="PROSITE-ProRule" id="PRU10035"/>
    </source>
</evidence>
<evidence type="ECO:0000255" key="3">
    <source>
        <dbReference type="PROSITE-ProRule" id="PRU10036"/>
    </source>
</evidence>
<evidence type="ECO:0000269" key="4">
    <source>
    </source>
</evidence>
<evidence type="ECO:0000305" key="5"/>
<evidence type="ECO:0000305" key="6">
    <source>
    </source>
</evidence>
<feature type="signal peptide">
    <location>
        <begin position="1" status="less than"/>
        <end position="3"/>
    </location>
</feature>
<feature type="chain" id="PRO_0000022777" description="Acidic phospholipase A2 S1E6-a">
    <location>
        <begin position="4"/>
        <end position="126"/>
    </location>
</feature>
<feature type="active site" evidence="1">
    <location>
        <position position="50"/>
    </location>
</feature>
<feature type="active site" evidence="1">
    <location>
        <position position="92"/>
    </location>
</feature>
<feature type="binding site" evidence="1">
    <location>
        <position position="30"/>
    </location>
    <ligand>
        <name>Ca(2+)</name>
        <dbReference type="ChEBI" id="CHEBI:29108"/>
    </ligand>
</feature>
<feature type="binding site" evidence="1">
    <location>
        <position position="32"/>
    </location>
    <ligand>
        <name>Ca(2+)</name>
        <dbReference type="ChEBI" id="CHEBI:29108"/>
    </ligand>
</feature>
<feature type="binding site" evidence="1">
    <location>
        <position position="34"/>
    </location>
    <ligand>
        <name>Ca(2+)</name>
        <dbReference type="ChEBI" id="CHEBI:29108"/>
    </ligand>
</feature>
<feature type="binding site" evidence="1">
    <location>
        <position position="51"/>
    </location>
    <ligand>
        <name>Ca(2+)</name>
        <dbReference type="ChEBI" id="CHEBI:29108"/>
    </ligand>
</feature>
<feature type="disulfide bond" evidence="1">
    <location>
        <begin position="29"/>
        <end position="119"/>
    </location>
</feature>
<feature type="disulfide bond" evidence="1">
    <location>
        <begin position="31"/>
        <end position="47"/>
    </location>
</feature>
<feature type="disulfide bond" evidence="1">
    <location>
        <begin position="46"/>
        <end position="98"/>
    </location>
</feature>
<feature type="disulfide bond" evidence="1">
    <location>
        <begin position="52"/>
        <end position="126"/>
    </location>
</feature>
<feature type="disulfide bond" evidence="1">
    <location>
        <begin position="53"/>
        <end position="91"/>
    </location>
</feature>
<feature type="disulfide bond" evidence="1">
    <location>
        <begin position="60"/>
        <end position="84"/>
    </location>
</feature>
<feature type="disulfide bond" evidence="1">
    <location>
        <begin position="78"/>
        <end position="89"/>
    </location>
</feature>
<feature type="non-terminal residue">
    <location>
        <position position="1"/>
    </location>
</feature>